<geneLocation type="chloroplast"/>
<sequence length="495" mass="53299">MRINPTTSGSAVSTLEEKNLGRIAQIIGPVLDVVFPPGKMPNIYNALVVKGRDTVGQQINVICEVQQLLGNNRVRAVAMSATDGLTRGMEVLDTGAALSVPVGGATLGRIFNVLGEPVDNLGPVDTRTTSPIHRSAPAFIQLDTKLSIFETGIKVVDLLAPYRRGGKIGLFGGAGVGKTVLIMELINNIAKAHGGVSVFGGVGERTREGNDLYMEMKESGVINEKNIAESKVALVYGQMNEPPGARMRVGLTALTMAEYFRDVNEQDVLLFIDNIFRFVQAGSEVSALLGRMPSAVGYQPTLSTEMGSLQERITSTKEGSITSIQAVYVPADDLTDPAPATTFAHLDATTVLSRGLAAKGIYPAVDPLDSTSTMLQPRIVGEEHYETAQRVKQTLQRYKELQDIIAILGLDELSEEDRLTVARARKIERFLSQPFFVAEVFTGSPGKYVGLAETIRGFQLILSGELDGLPEQAFYLVGNIDEATAKAMNLEGEKK</sequence>
<gene>
    <name evidence="1" type="primary">atpB</name>
</gene>
<name>ATPB_BARJA</name>
<reference key="1">
    <citation type="journal article" date="2003" name="J. Plant Res.">
        <title>Phylogenetic relationships among genera of Massonieae (Hyacinthaceae) inferred from plastid DNA and seed morphology.</title>
        <authorList>
            <person name="Pfosser M.F."/>
            <person name="Wetschnig W."/>
            <person name="Ungar S."/>
            <person name="Prenner G."/>
        </authorList>
    </citation>
    <scope>NUCLEOTIDE SEQUENCE [GENOMIC DNA]</scope>
    <source>
        <strain>cv. H599</strain>
        <strain>cv. H638</strain>
    </source>
</reference>
<protein>
    <recommendedName>
        <fullName evidence="1">ATP synthase subunit beta, chloroplastic</fullName>
        <ecNumber evidence="1">7.1.2.2</ecNumber>
    </recommendedName>
    <alternativeName>
        <fullName evidence="1">ATP synthase F1 sector subunit beta</fullName>
    </alternativeName>
    <alternativeName>
        <fullName evidence="1">F-ATPase subunit beta</fullName>
    </alternativeName>
</protein>
<organism>
    <name type="scientific">Barnardia japonica</name>
    <name type="common">Chinese squill</name>
    <name type="synonym">Scilla scilloides</name>
    <dbReference type="NCBI Taxonomy" id="49652"/>
    <lineage>
        <taxon>Eukaryota</taxon>
        <taxon>Viridiplantae</taxon>
        <taxon>Streptophyta</taxon>
        <taxon>Embryophyta</taxon>
        <taxon>Tracheophyta</taxon>
        <taxon>Spermatophyta</taxon>
        <taxon>Magnoliopsida</taxon>
        <taxon>Liliopsida</taxon>
        <taxon>Asparagales</taxon>
        <taxon>Hyacinthaceae</taxon>
        <taxon>Hyacinthoideae</taxon>
        <taxon>Hyacintheae</taxon>
        <taxon>Scilla</taxon>
    </lineage>
</organism>
<evidence type="ECO:0000255" key="1">
    <source>
        <dbReference type="HAMAP-Rule" id="MF_01347"/>
    </source>
</evidence>
<feature type="chain" id="PRO_0000254446" description="ATP synthase subunit beta, chloroplastic">
    <location>
        <begin position="1"/>
        <end position="495"/>
    </location>
</feature>
<feature type="binding site" evidence="1">
    <location>
        <begin position="172"/>
        <end position="179"/>
    </location>
    <ligand>
        <name>ATP</name>
        <dbReference type="ChEBI" id="CHEBI:30616"/>
    </ligand>
</feature>
<feature type="sequence variant" description="In strain: cv. H599.">
    <original>L</original>
    <variation>I</variation>
    <location>
        <position position="92"/>
    </location>
</feature>
<accession>Q85V24</accession>
<accession>Q85V25</accession>
<keyword id="KW-0066">ATP synthesis</keyword>
<keyword id="KW-0067">ATP-binding</keyword>
<keyword id="KW-0139">CF(1)</keyword>
<keyword id="KW-0150">Chloroplast</keyword>
<keyword id="KW-0375">Hydrogen ion transport</keyword>
<keyword id="KW-0406">Ion transport</keyword>
<keyword id="KW-0472">Membrane</keyword>
<keyword id="KW-0547">Nucleotide-binding</keyword>
<keyword id="KW-0934">Plastid</keyword>
<keyword id="KW-0793">Thylakoid</keyword>
<keyword id="KW-1278">Translocase</keyword>
<keyword id="KW-0813">Transport</keyword>
<dbReference type="EC" id="7.1.2.2" evidence="1"/>
<dbReference type="EMBL" id="AJ508219">
    <property type="protein sequence ID" value="CAD48416.1"/>
    <property type="molecule type" value="Genomic_DNA"/>
</dbReference>
<dbReference type="EMBL" id="AJ508218">
    <property type="protein sequence ID" value="CAD48415.1"/>
    <property type="molecule type" value="Genomic_DNA"/>
</dbReference>
<dbReference type="SMR" id="Q85V24"/>
<dbReference type="GO" id="GO:0009535">
    <property type="term" value="C:chloroplast thylakoid membrane"/>
    <property type="evidence" value="ECO:0007669"/>
    <property type="project" value="UniProtKB-SubCell"/>
</dbReference>
<dbReference type="GO" id="GO:0005739">
    <property type="term" value="C:mitochondrion"/>
    <property type="evidence" value="ECO:0007669"/>
    <property type="project" value="GOC"/>
</dbReference>
<dbReference type="GO" id="GO:0045259">
    <property type="term" value="C:proton-transporting ATP synthase complex"/>
    <property type="evidence" value="ECO:0007669"/>
    <property type="project" value="UniProtKB-KW"/>
</dbReference>
<dbReference type="GO" id="GO:0005524">
    <property type="term" value="F:ATP binding"/>
    <property type="evidence" value="ECO:0007669"/>
    <property type="project" value="UniProtKB-UniRule"/>
</dbReference>
<dbReference type="GO" id="GO:0016887">
    <property type="term" value="F:ATP hydrolysis activity"/>
    <property type="evidence" value="ECO:0007669"/>
    <property type="project" value="InterPro"/>
</dbReference>
<dbReference type="GO" id="GO:0046933">
    <property type="term" value="F:proton-transporting ATP synthase activity, rotational mechanism"/>
    <property type="evidence" value="ECO:0007669"/>
    <property type="project" value="UniProtKB-UniRule"/>
</dbReference>
<dbReference type="GO" id="GO:0042776">
    <property type="term" value="P:proton motive force-driven mitochondrial ATP synthesis"/>
    <property type="evidence" value="ECO:0007669"/>
    <property type="project" value="TreeGrafter"/>
</dbReference>
<dbReference type="CDD" id="cd18110">
    <property type="entry name" value="ATP-synt_F1_beta_C"/>
    <property type="match status" value="1"/>
</dbReference>
<dbReference type="CDD" id="cd18115">
    <property type="entry name" value="ATP-synt_F1_beta_N"/>
    <property type="match status" value="1"/>
</dbReference>
<dbReference type="CDD" id="cd01133">
    <property type="entry name" value="F1-ATPase_beta_CD"/>
    <property type="match status" value="1"/>
</dbReference>
<dbReference type="FunFam" id="1.10.1140.10:FF:000001">
    <property type="entry name" value="ATP synthase subunit beta"/>
    <property type="match status" value="1"/>
</dbReference>
<dbReference type="FunFam" id="3.40.50.300:FF:000004">
    <property type="entry name" value="ATP synthase subunit beta"/>
    <property type="match status" value="1"/>
</dbReference>
<dbReference type="FunFam" id="2.40.10.170:FF:000002">
    <property type="entry name" value="ATP synthase subunit beta, chloroplastic"/>
    <property type="match status" value="1"/>
</dbReference>
<dbReference type="Gene3D" id="2.40.10.170">
    <property type="match status" value="1"/>
</dbReference>
<dbReference type="Gene3D" id="1.10.1140.10">
    <property type="entry name" value="Bovine Mitochondrial F1-atpase, Atp Synthase Beta Chain, Chain D, domain 3"/>
    <property type="match status" value="1"/>
</dbReference>
<dbReference type="Gene3D" id="3.40.50.300">
    <property type="entry name" value="P-loop containing nucleotide triphosphate hydrolases"/>
    <property type="match status" value="1"/>
</dbReference>
<dbReference type="HAMAP" id="MF_01347">
    <property type="entry name" value="ATP_synth_beta_bact"/>
    <property type="match status" value="1"/>
</dbReference>
<dbReference type="InterPro" id="IPR003593">
    <property type="entry name" value="AAA+_ATPase"/>
</dbReference>
<dbReference type="InterPro" id="IPR055190">
    <property type="entry name" value="ATP-synt_VA_C"/>
</dbReference>
<dbReference type="InterPro" id="IPR005722">
    <property type="entry name" value="ATP_synth_F1_bsu"/>
</dbReference>
<dbReference type="InterPro" id="IPR020003">
    <property type="entry name" value="ATPase_a/bsu_AS"/>
</dbReference>
<dbReference type="InterPro" id="IPR050053">
    <property type="entry name" value="ATPase_alpha/beta_chains"/>
</dbReference>
<dbReference type="InterPro" id="IPR004100">
    <property type="entry name" value="ATPase_F1/V1/A1_a/bsu_N"/>
</dbReference>
<dbReference type="InterPro" id="IPR036121">
    <property type="entry name" value="ATPase_F1/V1/A1_a/bsu_N_sf"/>
</dbReference>
<dbReference type="InterPro" id="IPR000194">
    <property type="entry name" value="ATPase_F1/V1/A1_a/bsu_nucl-bd"/>
</dbReference>
<dbReference type="InterPro" id="IPR024034">
    <property type="entry name" value="ATPase_F1/V1_b/a_C"/>
</dbReference>
<dbReference type="InterPro" id="IPR027417">
    <property type="entry name" value="P-loop_NTPase"/>
</dbReference>
<dbReference type="NCBIfam" id="TIGR01039">
    <property type="entry name" value="atpD"/>
    <property type="match status" value="1"/>
</dbReference>
<dbReference type="PANTHER" id="PTHR15184">
    <property type="entry name" value="ATP SYNTHASE"/>
    <property type="match status" value="1"/>
</dbReference>
<dbReference type="PANTHER" id="PTHR15184:SF71">
    <property type="entry name" value="ATP SYNTHASE SUBUNIT BETA, MITOCHONDRIAL"/>
    <property type="match status" value="1"/>
</dbReference>
<dbReference type="Pfam" id="PF00006">
    <property type="entry name" value="ATP-synt_ab"/>
    <property type="match status" value="1"/>
</dbReference>
<dbReference type="Pfam" id="PF02874">
    <property type="entry name" value="ATP-synt_ab_N"/>
    <property type="match status" value="1"/>
</dbReference>
<dbReference type="Pfam" id="PF22919">
    <property type="entry name" value="ATP-synt_VA_C"/>
    <property type="match status" value="1"/>
</dbReference>
<dbReference type="SMART" id="SM00382">
    <property type="entry name" value="AAA"/>
    <property type="match status" value="1"/>
</dbReference>
<dbReference type="SUPFAM" id="SSF47917">
    <property type="entry name" value="C-terminal domain of alpha and beta subunits of F1 ATP synthase"/>
    <property type="match status" value="1"/>
</dbReference>
<dbReference type="SUPFAM" id="SSF50615">
    <property type="entry name" value="N-terminal domain of alpha and beta subunits of F1 ATP synthase"/>
    <property type="match status" value="1"/>
</dbReference>
<dbReference type="SUPFAM" id="SSF52540">
    <property type="entry name" value="P-loop containing nucleoside triphosphate hydrolases"/>
    <property type="match status" value="1"/>
</dbReference>
<dbReference type="PROSITE" id="PS00152">
    <property type="entry name" value="ATPASE_ALPHA_BETA"/>
    <property type="match status" value="1"/>
</dbReference>
<comment type="function">
    <text evidence="1">Produces ATP from ADP in the presence of a proton gradient across the membrane. The catalytic sites are hosted primarily by the beta subunits.</text>
</comment>
<comment type="catalytic activity">
    <reaction evidence="1">
        <text>ATP + H2O + 4 H(+)(in) = ADP + phosphate + 5 H(+)(out)</text>
        <dbReference type="Rhea" id="RHEA:57720"/>
        <dbReference type="ChEBI" id="CHEBI:15377"/>
        <dbReference type="ChEBI" id="CHEBI:15378"/>
        <dbReference type="ChEBI" id="CHEBI:30616"/>
        <dbReference type="ChEBI" id="CHEBI:43474"/>
        <dbReference type="ChEBI" id="CHEBI:456216"/>
        <dbReference type="EC" id="7.1.2.2"/>
    </reaction>
</comment>
<comment type="subunit">
    <text evidence="1">F-type ATPases have 2 components, CF(1) - the catalytic core - and CF(0) - the membrane proton channel. CF(1) has five subunits: alpha(3), beta(3), gamma(1), delta(1), epsilon(1). CF(0) has four main subunits: a(1), b(1), b'(1) and c(9-12).</text>
</comment>
<comment type="subcellular location">
    <subcellularLocation>
        <location evidence="1">Plastid</location>
        <location evidence="1">Chloroplast thylakoid membrane</location>
        <topology evidence="1">Peripheral membrane protein</topology>
    </subcellularLocation>
</comment>
<comment type="similarity">
    <text evidence="1">Belongs to the ATPase alpha/beta chains family.</text>
</comment>
<proteinExistence type="inferred from homology"/>